<keyword id="KW-0028">Amino-acid biosynthesis</keyword>
<keyword id="KW-0057">Aromatic amino acid biosynthesis</keyword>
<keyword id="KW-0456">Lyase</keyword>
<keyword id="KW-0704">Schiff base</keyword>
<accession>Q9RN77</accession>
<evidence type="ECO:0000255" key="1">
    <source>
        <dbReference type="HAMAP-Rule" id="MF_00214"/>
    </source>
</evidence>
<reference key="1">
    <citation type="submission" date="1999-09" db="EMBL/GenBank/DDBJ databases">
        <title>Molecular cloning and characterization of the aroD gene encoding 3-dehydroquinase from Salmonella enteritidis.</title>
        <authorList>
            <person name="Moutafis G."/>
            <person name="Fry B.N."/>
            <person name="Coloe P.J."/>
        </authorList>
    </citation>
    <scope>NUCLEOTIDE SEQUENCE [GENOMIC DNA]</scope>
    <source>
        <strain>446302</strain>
    </source>
</reference>
<proteinExistence type="inferred from homology"/>
<organism>
    <name type="scientific">Salmonella enteritidis</name>
    <dbReference type="NCBI Taxonomy" id="149539"/>
    <lineage>
        <taxon>Bacteria</taxon>
        <taxon>Pseudomonadati</taxon>
        <taxon>Pseudomonadota</taxon>
        <taxon>Gammaproteobacteria</taxon>
        <taxon>Enterobacterales</taxon>
        <taxon>Enterobacteriaceae</taxon>
        <taxon>Salmonella</taxon>
    </lineage>
</organism>
<feature type="chain" id="PRO_0000138804" description="3-dehydroquinate dehydratase">
    <location>
        <begin position="1"/>
        <end position="252"/>
    </location>
</feature>
<feature type="active site" description="Proton donor/acceptor" evidence="1">
    <location>
        <position position="143"/>
    </location>
</feature>
<feature type="active site" description="Schiff-base intermediate with substrate" evidence="1">
    <location>
        <position position="170"/>
    </location>
</feature>
<feature type="binding site" evidence="1">
    <location>
        <position position="21"/>
    </location>
    <ligand>
        <name>3-dehydroquinate</name>
        <dbReference type="ChEBI" id="CHEBI:32364"/>
    </ligand>
</feature>
<feature type="binding site" evidence="1">
    <location>
        <begin position="46"/>
        <end position="48"/>
    </location>
    <ligand>
        <name>3-dehydroquinate</name>
        <dbReference type="ChEBI" id="CHEBI:32364"/>
    </ligand>
</feature>
<feature type="binding site" evidence="1">
    <location>
        <position position="82"/>
    </location>
    <ligand>
        <name>3-dehydroquinate</name>
        <dbReference type="ChEBI" id="CHEBI:32364"/>
    </ligand>
</feature>
<feature type="binding site" evidence="1">
    <location>
        <position position="213"/>
    </location>
    <ligand>
        <name>3-dehydroquinate</name>
        <dbReference type="ChEBI" id="CHEBI:32364"/>
    </ligand>
</feature>
<feature type="binding site" evidence="1">
    <location>
        <position position="232"/>
    </location>
    <ligand>
        <name>3-dehydroquinate</name>
        <dbReference type="ChEBI" id="CHEBI:32364"/>
    </ligand>
</feature>
<feature type="binding site" evidence="1">
    <location>
        <position position="236"/>
    </location>
    <ligand>
        <name>3-dehydroquinate</name>
        <dbReference type="ChEBI" id="CHEBI:32364"/>
    </ligand>
</feature>
<gene>
    <name evidence="1" type="primary">aroD</name>
</gene>
<dbReference type="EC" id="4.2.1.10" evidence="1"/>
<dbReference type="EMBL" id="AF184963">
    <property type="protein sequence ID" value="AAD56242.1"/>
    <property type="molecule type" value="Genomic_DNA"/>
</dbReference>
<dbReference type="RefSeq" id="WP_000860224.1">
    <property type="nucleotide sequence ID" value="NZ_WIDC01000191.1"/>
</dbReference>
<dbReference type="SMR" id="Q9RN77"/>
<dbReference type="PATRIC" id="fig|149539.316.peg.1819"/>
<dbReference type="OMA" id="ATMAMGE"/>
<dbReference type="UniPathway" id="UPA00053">
    <property type="reaction ID" value="UER00086"/>
</dbReference>
<dbReference type="GO" id="GO:0003855">
    <property type="term" value="F:3-dehydroquinate dehydratase activity"/>
    <property type="evidence" value="ECO:0007669"/>
    <property type="project" value="UniProtKB-UniRule"/>
</dbReference>
<dbReference type="GO" id="GO:0046279">
    <property type="term" value="P:3,4-dihydroxybenzoate biosynthetic process"/>
    <property type="evidence" value="ECO:0007669"/>
    <property type="project" value="UniProtKB-ARBA"/>
</dbReference>
<dbReference type="GO" id="GO:0008652">
    <property type="term" value="P:amino acid biosynthetic process"/>
    <property type="evidence" value="ECO:0007669"/>
    <property type="project" value="UniProtKB-KW"/>
</dbReference>
<dbReference type="GO" id="GO:0009073">
    <property type="term" value="P:aromatic amino acid family biosynthetic process"/>
    <property type="evidence" value="ECO:0007669"/>
    <property type="project" value="UniProtKB-KW"/>
</dbReference>
<dbReference type="GO" id="GO:0009423">
    <property type="term" value="P:chorismate biosynthetic process"/>
    <property type="evidence" value="ECO:0007669"/>
    <property type="project" value="UniProtKB-UniRule"/>
</dbReference>
<dbReference type="CDD" id="cd00502">
    <property type="entry name" value="DHQase_I"/>
    <property type="match status" value="1"/>
</dbReference>
<dbReference type="FunFam" id="3.20.20.70:FF:000047">
    <property type="entry name" value="3-dehydroquinate dehydratase"/>
    <property type="match status" value="1"/>
</dbReference>
<dbReference type="Gene3D" id="3.20.20.70">
    <property type="entry name" value="Aldolase class I"/>
    <property type="match status" value="1"/>
</dbReference>
<dbReference type="HAMAP" id="MF_00214">
    <property type="entry name" value="AroD"/>
    <property type="match status" value="1"/>
</dbReference>
<dbReference type="InterPro" id="IPR018508">
    <property type="entry name" value="3-dehydroquinate_DH_AS"/>
</dbReference>
<dbReference type="InterPro" id="IPR013785">
    <property type="entry name" value="Aldolase_TIM"/>
</dbReference>
<dbReference type="InterPro" id="IPR001381">
    <property type="entry name" value="DHquinase_I"/>
</dbReference>
<dbReference type="InterPro" id="IPR050146">
    <property type="entry name" value="Type-I_3-dehydroquinase"/>
</dbReference>
<dbReference type="NCBIfam" id="TIGR01093">
    <property type="entry name" value="aroD"/>
    <property type="match status" value="1"/>
</dbReference>
<dbReference type="PANTHER" id="PTHR43699">
    <property type="entry name" value="3-DEHYDROQUINATE DEHYDRATASE"/>
    <property type="match status" value="1"/>
</dbReference>
<dbReference type="PANTHER" id="PTHR43699:SF1">
    <property type="entry name" value="3-DEHYDROQUINATE DEHYDRATASE"/>
    <property type="match status" value="1"/>
</dbReference>
<dbReference type="Pfam" id="PF01487">
    <property type="entry name" value="DHquinase_I"/>
    <property type="match status" value="1"/>
</dbReference>
<dbReference type="SUPFAM" id="SSF51569">
    <property type="entry name" value="Aldolase"/>
    <property type="match status" value="1"/>
</dbReference>
<dbReference type="PROSITE" id="PS01028">
    <property type="entry name" value="DEHYDROQUINASE_I"/>
    <property type="match status" value="1"/>
</dbReference>
<comment type="function">
    <text evidence="1">Involved in the third step of the chorismate pathway, which leads to the biosynthesis of aromatic amino acids. Catalyzes the cis-dehydration of 3-dehydroquinate (DHQ) and introduces the first double bond of the aromatic ring to yield 3-dehydroshikimate.</text>
</comment>
<comment type="catalytic activity">
    <reaction evidence="1">
        <text>3-dehydroquinate = 3-dehydroshikimate + H2O</text>
        <dbReference type="Rhea" id="RHEA:21096"/>
        <dbReference type="ChEBI" id="CHEBI:15377"/>
        <dbReference type="ChEBI" id="CHEBI:16630"/>
        <dbReference type="ChEBI" id="CHEBI:32364"/>
        <dbReference type="EC" id="4.2.1.10"/>
    </reaction>
</comment>
<comment type="pathway">
    <text evidence="1">Metabolic intermediate biosynthesis; chorismate biosynthesis; chorismate from D-erythrose 4-phosphate and phosphoenolpyruvate: step 3/7.</text>
</comment>
<comment type="subunit">
    <text evidence="1">Homodimer.</text>
</comment>
<comment type="similarity">
    <text evidence="1">Belongs to the type-I 3-dehydroquinase family.</text>
</comment>
<sequence>MKTVTVRDLVVGEGAPKIIVSLMGKTITDVKSEALAYREADFDILEWRVDHFANVTTAESVLEAAGAIREIITDKPLLFTFRSAKEGGEQALTTGQYIALNRAAVDSGLVDMIDLELFTGDDEVKATVGYAHQHNVAVIMSNHDFHKTPAAEEIVQRLRKMQELGADIPKIAVMPQTKADVLTLLTATVEMQERYADRPIITMSMSKTGVISRLAGEVFGSAATFGAVKKASAPGQISVADLRTVLTILHQA</sequence>
<protein>
    <recommendedName>
        <fullName evidence="1">3-dehydroquinate dehydratase</fullName>
        <shortName evidence="1">3-dehydroquinase</shortName>
        <ecNumber evidence="1">4.2.1.10</ecNumber>
    </recommendedName>
    <alternativeName>
        <fullName evidence="1">Type I DHQase</fullName>
    </alternativeName>
    <alternativeName>
        <fullName evidence="1">Type I dehydroquinase</fullName>
        <shortName evidence="1">DHQ1</shortName>
    </alternativeName>
</protein>
<name>AROD_SALEN</name>